<proteinExistence type="inferred from homology"/>
<feature type="signal peptide" evidence="1">
    <location>
        <begin position="1"/>
        <end position="24"/>
    </location>
</feature>
<feature type="chain" id="PRO_0000021734" description="Protein MoxJ">
    <location>
        <begin position="25"/>
        <end position="276"/>
    </location>
</feature>
<reference key="1">
    <citation type="journal article" date="1991" name="J. Bacteriol.">
        <title>Isolation and characterization of the moxJ, moxG, moxI, and moxR genes of Paracoccus denitrificans: inactivation of moxJ, moxG, and moxR and the resultant effect on methylotrophic growth.</title>
        <authorList>
            <person name="van Spanning R.J.M."/>
            <person name="Wansell C.W."/>
            <person name="de Boer T."/>
            <person name="Hazelaar M.J."/>
            <person name="Anazawa H."/>
            <person name="Harms N."/>
            <person name="Oltmann L.F."/>
            <person name="Stouthamer A.H."/>
        </authorList>
    </citation>
    <scope>NUCLEOTIDE SEQUENCE [GENOMIC DNA]</scope>
</reference>
<reference key="2">
    <citation type="journal article" date="1989" name="Antonie Van Leeuwenhoek">
        <title>Regulation of methanol dehydrogenase synthesis in Paracoccus denitrificans.</title>
        <authorList>
            <person name="Harms N."/>
            <person name="van Spanning R.J.M."/>
            <person name="Oltmann L.F."/>
            <person name="Stouthamer A.H."/>
        </authorList>
    </citation>
    <scope>NUCLEOTIDE SEQUENCE [GENOMIC DNA]</scope>
</reference>
<protein>
    <recommendedName>
        <fullName>Protein MoxJ</fullName>
    </recommendedName>
</protein>
<gene>
    <name type="primary">moxJ</name>
</gene>
<evidence type="ECO:0000255" key="1"/>
<evidence type="ECO:0000305" key="2"/>
<keyword id="KW-0485">Methanol utilization</keyword>
<keyword id="KW-0574">Periplasm</keyword>
<keyword id="KW-0732">Signal</keyword>
<dbReference type="EMBL" id="M57684">
    <property type="protein sequence ID" value="AAA25582.1"/>
    <property type="molecule type" value="Genomic_DNA"/>
</dbReference>
<dbReference type="PIR" id="A41377">
    <property type="entry name" value="A41377"/>
</dbReference>
<dbReference type="RefSeq" id="WP_011749266.1">
    <property type="nucleotide sequence ID" value="NZ_JAOSHR010000012.1"/>
</dbReference>
<dbReference type="SMR" id="P29900"/>
<dbReference type="GeneID" id="93452677"/>
<dbReference type="OMA" id="TQIDPAR"/>
<dbReference type="GO" id="GO:0042597">
    <property type="term" value="C:periplasmic space"/>
    <property type="evidence" value="ECO:0007669"/>
    <property type="project" value="UniProtKB-SubCell"/>
</dbReference>
<dbReference type="GO" id="GO:0046170">
    <property type="term" value="P:methanol catabolic process"/>
    <property type="evidence" value="ECO:0007669"/>
    <property type="project" value="InterPro"/>
</dbReference>
<dbReference type="CDD" id="cd13531">
    <property type="entry name" value="PBP2_MxaJ"/>
    <property type="match status" value="1"/>
</dbReference>
<dbReference type="Gene3D" id="3.40.190.10">
    <property type="entry name" value="Periplasmic binding protein-like II"/>
    <property type="match status" value="2"/>
</dbReference>
<dbReference type="InterPro" id="IPR022455">
    <property type="entry name" value="Methanol_oxidation_MoxJ"/>
</dbReference>
<dbReference type="InterPro" id="IPR001638">
    <property type="entry name" value="Solute-binding_3/MltF_N"/>
</dbReference>
<dbReference type="NCBIfam" id="TIGR03870">
    <property type="entry name" value="ABC_MoxJ"/>
    <property type="match status" value="1"/>
</dbReference>
<dbReference type="PANTHER" id="PTHR35936:SF17">
    <property type="entry name" value="ARGININE-BINDING EXTRACELLULAR PROTEIN ARTP"/>
    <property type="match status" value="1"/>
</dbReference>
<dbReference type="PANTHER" id="PTHR35936">
    <property type="entry name" value="MEMBRANE-BOUND LYTIC MUREIN TRANSGLYCOSYLASE F"/>
    <property type="match status" value="1"/>
</dbReference>
<dbReference type="SMART" id="SM00062">
    <property type="entry name" value="PBPb"/>
    <property type="match status" value="1"/>
</dbReference>
<dbReference type="SUPFAM" id="SSF53850">
    <property type="entry name" value="Periplasmic binding protein-like II"/>
    <property type="match status" value="1"/>
</dbReference>
<organism>
    <name type="scientific">Paracoccus denitrificans</name>
    <dbReference type="NCBI Taxonomy" id="266"/>
    <lineage>
        <taxon>Bacteria</taxon>
        <taxon>Pseudomonadati</taxon>
        <taxon>Pseudomonadota</taxon>
        <taxon>Alphaproteobacteria</taxon>
        <taxon>Rhodobacterales</taxon>
        <taxon>Paracoccaceae</taxon>
        <taxon>Paracoccus</taxon>
    </lineage>
</organism>
<name>MOXJ_PARDE</name>
<sequence length="276" mass="30442">MLIDFRQVCGAGAAALALASPALADTTNLRVCASTKDAPFSDAQGAGFENKIAQVLADEMGATLDLVMLEKDAIYLVRDGIEKDLCDVLVGVDAGDERLLTTRPYYRSGYAFVTRQDRNFEGDKWQDVDQEGFDTFSYRLHSPAETILKYTGRYEYNLIYQASLTNFEDRRNKYTQVEASRVITEVADGGADLAIVFAPEAARYVRDSREPLRMTLITNEIERSDGVIIPLQYSQSVGVSKTHPELLGPIEQALQSGKARIDAILTEEGIPLLPSS</sequence>
<comment type="function">
    <text>May be involved in the assemblage of active methanol dehydrogenase and/or its cofactor PQQ in the periplasm.</text>
</comment>
<comment type="subcellular location">
    <subcellularLocation>
        <location evidence="2">Periplasm</location>
    </subcellularLocation>
</comment>
<accession>P29900</accession>